<gene>
    <name evidence="1" type="primary">kdpA</name>
    <name type="ordered locus">PSPTO_2242</name>
</gene>
<feature type="chain" id="PRO_0000166515" description="Potassium-transporting ATPase potassium-binding subunit">
    <location>
        <begin position="1"/>
        <end position="564"/>
    </location>
</feature>
<feature type="transmembrane region" description="Helical" evidence="1">
    <location>
        <begin position="7"/>
        <end position="27"/>
    </location>
</feature>
<feature type="transmembrane region" description="Helical" evidence="1">
    <location>
        <begin position="67"/>
        <end position="87"/>
    </location>
</feature>
<feature type="transmembrane region" description="Helical" evidence="1">
    <location>
        <begin position="135"/>
        <end position="155"/>
    </location>
</feature>
<feature type="transmembrane region" description="Helical" evidence="1">
    <location>
        <begin position="179"/>
        <end position="199"/>
    </location>
</feature>
<feature type="transmembrane region" description="Helical" evidence="1">
    <location>
        <begin position="258"/>
        <end position="278"/>
    </location>
</feature>
<feature type="transmembrane region" description="Helical" evidence="1">
    <location>
        <begin position="286"/>
        <end position="306"/>
    </location>
</feature>
<feature type="transmembrane region" description="Helical" evidence="1">
    <location>
        <begin position="382"/>
        <end position="402"/>
    </location>
</feature>
<feature type="transmembrane region" description="Helical" evidence="1">
    <location>
        <begin position="420"/>
        <end position="440"/>
    </location>
</feature>
<feature type="transmembrane region" description="Helical" evidence="1">
    <location>
        <begin position="487"/>
        <end position="507"/>
    </location>
</feature>
<feature type="transmembrane region" description="Helical" evidence="1">
    <location>
        <begin position="528"/>
        <end position="548"/>
    </location>
</feature>
<dbReference type="EMBL" id="AE016853">
    <property type="protein sequence ID" value="AAO55758.1"/>
    <property type="molecule type" value="Genomic_DNA"/>
</dbReference>
<dbReference type="RefSeq" id="NP_792063.1">
    <property type="nucleotide sequence ID" value="NC_004578.1"/>
</dbReference>
<dbReference type="RefSeq" id="WP_011103910.1">
    <property type="nucleotide sequence ID" value="NC_004578.1"/>
</dbReference>
<dbReference type="SMR" id="Q883V6"/>
<dbReference type="STRING" id="223283.PSPTO_2242"/>
<dbReference type="GeneID" id="1183893"/>
<dbReference type="KEGG" id="pst:PSPTO_2242"/>
<dbReference type="PATRIC" id="fig|223283.9.peg.2273"/>
<dbReference type="eggNOG" id="COG2060">
    <property type="taxonomic scope" value="Bacteria"/>
</dbReference>
<dbReference type="HOGENOM" id="CLU_018614_3_0_6"/>
<dbReference type="OrthoDB" id="9763796at2"/>
<dbReference type="PhylomeDB" id="Q883V6"/>
<dbReference type="Proteomes" id="UP000002515">
    <property type="component" value="Chromosome"/>
</dbReference>
<dbReference type="GO" id="GO:0005886">
    <property type="term" value="C:plasma membrane"/>
    <property type="evidence" value="ECO:0007669"/>
    <property type="project" value="UniProtKB-SubCell"/>
</dbReference>
<dbReference type="GO" id="GO:0008556">
    <property type="term" value="F:P-type potassium transmembrane transporter activity"/>
    <property type="evidence" value="ECO:0007669"/>
    <property type="project" value="InterPro"/>
</dbReference>
<dbReference type="GO" id="GO:0030955">
    <property type="term" value="F:potassium ion binding"/>
    <property type="evidence" value="ECO:0007669"/>
    <property type="project" value="UniProtKB-UniRule"/>
</dbReference>
<dbReference type="HAMAP" id="MF_00275">
    <property type="entry name" value="KdpA"/>
    <property type="match status" value="1"/>
</dbReference>
<dbReference type="InterPro" id="IPR004623">
    <property type="entry name" value="KdpA"/>
</dbReference>
<dbReference type="NCBIfam" id="TIGR00680">
    <property type="entry name" value="kdpA"/>
    <property type="match status" value="1"/>
</dbReference>
<dbReference type="PANTHER" id="PTHR30607">
    <property type="entry name" value="POTASSIUM-TRANSPORTING ATPASE A CHAIN"/>
    <property type="match status" value="1"/>
</dbReference>
<dbReference type="PANTHER" id="PTHR30607:SF2">
    <property type="entry name" value="POTASSIUM-TRANSPORTING ATPASE POTASSIUM-BINDING SUBUNIT"/>
    <property type="match status" value="1"/>
</dbReference>
<dbReference type="Pfam" id="PF03814">
    <property type="entry name" value="KdpA"/>
    <property type="match status" value="1"/>
</dbReference>
<dbReference type="PIRSF" id="PIRSF001294">
    <property type="entry name" value="K_ATPaseA"/>
    <property type="match status" value="1"/>
</dbReference>
<comment type="function">
    <text evidence="1">Part of the high-affinity ATP-driven potassium transport (or Kdp) system, which catalyzes the hydrolysis of ATP coupled with the electrogenic transport of potassium into the cytoplasm. This subunit binds the periplasmic potassium ions and delivers the ions to the membrane domain of KdpB through an intramembrane tunnel.</text>
</comment>
<comment type="subunit">
    <text evidence="1">The system is composed of three essential subunits: KdpA, KdpB and KdpC.</text>
</comment>
<comment type="subcellular location">
    <subcellularLocation>
        <location evidence="1">Cell inner membrane</location>
        <topology evidence="1">Multi-pass membrane protein</topology>
    </subcellularLocation>
</comment>
<comment type="similarity">
    <text evidence="1">Belongs to the KdpA family.</text>
</comment>
<accession>Q883V6</accession>
<proteinExistence type="inferred from homology"/>
<reference key="1">
    <citation type="journal article" date="2003" name="Proc. Natl. Acad. Sci. U.S.A.">
        <title>The complete genome sequence of the Arabidopsis and tomato pathogen Pseudomonas syringae pv. tomato DC3000.</title>
        <authorList>
            <person name="Buell C.R."/>
            <person name="Joardar V."/>
            <person name="Lindeberg M."/>
            <person name="Selengut J."/>
            <person name="Paulsen I.T."/>
            <person name="Gwinn M.L."/>
            <person name="Dodson R.J."/>
            <person name="DeBoy R.T."/>
            <person name="Durkin A.S."/>
            <person name="Kolonay J.F."/>
            <person name="Madupu R."/>
            <person name="Daugherty S.C."/>
            <person name="Brinkac L.M."/>
            <person name="Beanan M.J."/>
            <person name="Haft D.H."/>
            <person name="Nelson W.C."/>
            <person name="Davidsen T.M."/>
            <person name="Zafar N."/>
            <person name="Zhou L."/>
            <person name="Liu J."/>
            <person name="Yuan Q."/>
            <person name="Khouri H.M."/>
            <person name="Fedorova N.B."/>
            <person name="Tran B."/>
            <person name="Russell D."/>
            <person name="Berry K.J."/>
            <person name="Utterback T.R."/>
            <person name="Van Aken S.E."/>
            <person name="Feldblyum T.V."/>
            <person name="D'Ascenzo M."/>
            <person name="Deng W.-L."/>
            <person name="Ramos A.R."/>
            <person name="Alfano J.R."/>
            <person name="Cartinhour S."/>
            <person name="Chatterjee A.K."/>
            <person name="Delaney T.P."/>
            <person name="Lazarowitz S.G."/>
            <person name="Martin G.B."/>
            <person name="Schneider D.J."/>
            <person name="Tang X."/>
            <person name="Bender C.L."/>
            <person name="White O."/>
            <person name="Fraser C.M."/>
            <person name="Collmer A."/>
        </authorList>
    </citation>
    <scope>NUCLEOTIDE SEQUENCE [LARGE SCALE GENOMIC DNA]</scope>
    <source>
        <strain>ATCC BAA-871 / DC3000</strain>
    </source>
</reference>
<protein>
    <recommendedName>
        <fullName evidence="1">Potassium-transporting ATPase potassium-binding subunit</fullName>
    </recommendedName>
    <alternativeName>
        <fullName evidence="1">ATP phosphohydrolase [potassium-transporting] A chain</fullName>
    </alternativeName>
    <alternativeName>
        <fullName evidence="1">Potassium-binding and translocating subunit A</fullName>
    </alternativeName>
    <alternativeName>
        <fullName evidence="1">Potassium-translocating ATPase A chain</fullName>
    </alternativeName>
</protein>
<organism>
    <name type="scientific">Pseudomonas syringae pv. tomato (strain ATCC BAA-871 / DC3000)</name>
    <dbReference type="NCBI Taxonomy" id="223283"/>
    <lineage>
        <taxon>Bacteria</taxon>
        <taxon>Pseudomonadati</taxon>
        <taxon>Pseudomonadota</taxon>
        <taxon>Gammaproteobacteria</taxon>
        <taxon>Pseudomonadales</taxon>
        <taxon>Pseudomonadaceae</taxon>
        <taxon>Pseudomonas</taxon>
    </lineage>
</organism>
<sequence>MHSYDYLLILAFLVLLLAPAPWLGRFFYRVMEGERTWLSPVLGPVERACYLISGVDPKTEQSWKQYAWALLAFNLAGFVVLFAMLMLQGLLPLNPQQLPGMEWSLAFNTAMSFVTNTNWQAYSGEASLSYLSQMVGLTVQNFVSAATGLAVLVALCRGISRRSSHSLGNFWADMTRATLYALLPISIVLAVFLVWQGVPQNFAHYIDALTLQGADQSLPMGPAASQISIKQLGTNGGGFFGVNSAHPFENPTAWSNLFELVSILLIPAALVFTFGHYVKDMRQSRAILGCMLALLLIGGAVSLWAEYQPNPALNIAGVEQTAPLEGKETRFGTTGTVLWSVATTAASNGSVNGMHDSLNPLAGMVALVNMMVGEVIFGGVGVGLNGMVLNVLIAVFLAGLMIGRTPEYLGKKLQAQEVRLLVATLLVMPVGVLVLGAIAASLPGPAGAISNPGPHGFSQLLYAYTSATANNGSAFGGFSANTVFHNLMLSLAIFIGRFGYILPVLALAGSLAMKKTAPQGQNSFPTHGLLFVTLLTVTILLVGGLTFLPTLALGPIAEHLSLGF</sequence>
<keyword id="KW-0997">Cell inner membrane</keyword>
<keyword id="KW-1003">Cell membrane</keyword>
<keyword id="KW-0406">Ion transport</keyword>
<keyword id="KW-0472">Membrane</keyword>
<keyword id="KW-0630">Potassium</keyword>
<keyword id="KW-0633">Potassium transport</keyword>
<keyword id="KW-1185">Reference proteome</keyword>
<keyword id="KW-0812">Transmembrane</keyword>
<keyword id="KW-1133">Transmembrane helix</keyword>
<keyword id="KW-0813">Transport</keyword>
<evidence type="ECO:0000255" key="1">
    <source>
        <dbReference type="HAMAP-Rule" id="MF_00275"/>
    </source>
</evidence>
<name>KDPA_PSESM</name>